<comment type="similarity">
    <text evidence="3">Belongs to the short-chain dehydrogenases/reductases (SDR) family.</text>
</comment>
<reference key="1">
    <citation type="journal article" date="1997" name="Genetics">
        <title>Gene flow and natural selection in the origin of Drosophila pseudoobscura and close relatives.</title>
        <authorList>
            <person name="Wang R.L."/>
            <person name="Wakeley J."/>
            <person name="Hey J."/>
        </authorList>
    </citation>
    <scope>NUCLEOTIDE SEQUENCE [GENOMIC DNA]</scope>
    <source>
        <strain>Persimi40</strain>
        <strain>Persimi42</strain>
        <strain>Persimi44</strain>
        <strain>Persimi49</strain>
        <strain>Persimi50</strain>
    </source>
</reference>
<evidence type="ECO:0000250" key="1"/>
<evidence type="ECO:0000255" key="2">
    <source>
        <dbReference type="PROSITE-ProRule" id="PRU10001"/>
    </source>
</evidence>
<evidence type="ECO:0000305" key="3"/>
<keyword id="KW-0560">Oxidoreductase</keyword>
<feature type="chain" id="PRO_0000054510" description="Alcohol dehydrogenase-related 31 kDa protein">
    <location>
        <begin position="1"/>
        <end position="278"/>
    </location>
</feature>
<feature type="active site" description="Proton acceptor" evidence="2">
    <location>
        <position position="152"/>
    </location>
</feature>
<feature type="binding site" evidence="1">
    <location>
        <begin position="11"/>
        <end position="34"/>
    </location>
    <ligand>
        <name>NAD(+)</name>
        <dbReference type="ChEBI" id="CHEBI:57540"/>
    </ligand>
</feature>
<feature type="binding site" evidence="1">
    <location>
        <position position="139"/>
    </location>
    <ligand>
        <name>substrate</name>
    </ligand>
</feature>
<feature type="sequence variant" description="In strain: Persimi42 and Persimi50.">
    <original>A</original>
    <variation>E</variation>
    <location>
        <position position="200"/>
    </location>
</feature>
<feature type="sequence variant" description="In strain: Persimi42 and Persimi50.">
    <original>T</original>
    <variation>S</variation>
    <location>
        <position position="204"/>
    </location>
</feature>
<feature type="sequence variant" description="In strain: Persimi40 and Persimi42.">
    <original>Q</original>
    <variation>K</variation>
    <location>
        <position position="222"/>
    </location>
</feature>
<gene>
    <name type="primary">Adhr</name>
    <name type="synonym">Adh-dup</name>
</gene>
<organism>
    <name type="scientific">Drosophila persimilis</name>
    <name type="common">Fruit fly</name>
    <dbReference type="NCBI Taxonomy" id="7234"/>
    <lineage>
        <taxon>Eukaryota</taxon>
        <taxon>Metazoa</taxon>
        <taxon>Ecdysozoa</taxon>
        <taxon>Arthropoda</taxon>
        <taxon>Hexapoda</taxon>
        <taxon>Insecta</taxon>
        <taxon>Pterygota</taxon>
        <taxon>Neoptera</taxon>
        <taxon>Endopterygota</taxon>
        <taxon>Diptera</taxon>
        <taxon>Brachycera</taxon>
        <taxon>Muscomorpha</taxon>
        <taxon>Ephydroidea</taxon>
        <taxon>Drosophilidae</taxon>
        <taxon>Drosophila</taxon>
        <taxon>Sophophora</taxon>
    </lineage>
</organism>
<sequence>MYDLTGKHVCYVADCGGIALETSKVLMTKNIAKLAILQSVENPPAIAQLQSIKHSTQIFFWTFDVTMAREEMKKYFDEVMVQMDYIDVLINGATLCDERNIDATINTNLTGMMNTVATVLPYMDRKMGGSGGLIVNVTSVIGLDPSPVFCAYSASKFGVIGFTRSLADPLYYTQNGVAVMAVCCGPTKVFVDRELTAFLAYGQTFADRLRRAPCQSTAVCGQNIVNAIERSENGQIWIADKGGLESVALHWYWHMADQFVNYMQSTDDEDQEFFLGQR</sequence>
<proteinExistence type="inferred from homology"/>
<name>ADHR_DROPE</name>
<protein>
    <recommendedName>
        <fullName>Alcohol dehydrogenase-related 31 kDa protein</fullName>
    </recommendedName>
</protein>
<dbReference type="EMBL" id="AF006564">
    <property type="protein sequence ID" value="AAB80703.1"/>
    <property type="molecule type" value="Genomic_DNA"/>
</dbReference>
<dbReference type="EMBL" id="AF006565">
    <property type="protein sequence ID" value="AAB80705.1"/>
    <property type="molecule type" value="Genomic_DNA"/>
</dbReference>
<dbReference type="EMBL" id="AF006566">
    <property type="protein sequence ID" value="AAB80707.1"/>
    <property type="molecule type" value="Genomic_DNA"/>
</dbReference>
<dbReference type="EMBL" id="AF006567">
    <property type="protein sequence ID" value="AAB80709.1"/>
    <property type="molecule type" value="Genomic_DNA"/>
</dbReference>
<dbReference type="EMBL" id="AF006568">
    <property type="protein sequence ID" value="AAB80711.1"/>
    <property type="molecule type" value="Genomic_DNA"/>
</dbReference>
<dbReference type="SMR" id="O16091"/>
<dbReference type="eggNOG" id="KOG4169">
    <property type="taxonomic scope" value="Eukaryota"/>
</dbReference>
<dbReference type="OrthoDB" id="417891at2759"/>
<dbReference type="GO" id="GO:0005737">
    <property type="term" value="C:cytoplasm"/>
    <property type="evidence" value="ECO:0007669"/>
    <property type="project" value="TreeGrafter"/>
</dbReference>
<dbReference type="GO" id="GO:0016491">
    <property type="term" value="F:oxidoreductase activity"/>
    <property type="evidence" value="ECO:0007669"/>
    <property type="project" value="UniProtKB-KW"/>
</dbReference>
<dbReference type="CDD" id="cd05323">
    <property type="entry name" value="ADH_SDR_c_like"/>
    <property type="match status" value="1"/>
</dbReference>
<dbReference type="Gene3D" id="3.40.50.720">
    <property type="entry name" value="NAD(P)-binding Rossmann-like Domain"/>
    <property type="match status" value="1"/>
</dbReference>
<dbReference type="InterPro" id="IPR002427">
    <property type="entry name" value="ADH-rel"/>
</dbReference>
<dbReference type="InterPro" id="IPR036291">
    <property type="entry name" value="NAD(P)-bd_dom_sf"/>
</dbReference>
<dbReference type="InterPro" id="IPR020904">
    <property type="entry name" value="Sc_DH/Rdtase_CS"/>
</dbReference>
<dbReference type="InterPro" id="IPR002347">
    <property type="entry name" value="SDR_fam"/>
</dbReference>
<dbReference type="PANTHER" id="PTHR44229">
    <property type="entry name" value="15-HYDROXYPROSTAGLANDIN DEHYDROGENASE [NAD(+)]"/>
    <property type="match status" value="1"/>
</dbReference>
<dbReference type="PANTHER" id="PTHR44229:SF8">
    <property type="entry name" value="ALCOHOL DEHYDROGENASE-RELATED"/>
    <property type="match status" value="1"/>
</dbReference>
<dbReference type="Pfam" id="PF00106">
    <property type="entry name" value="adh_short"/>
    <property type="match status" value="1"/>
</dbReference>
<dbReference type="PRINTS" id="PR01170">
    <property type="entry name" value="ADHRELATED"/>
</dbReference>
<dbReference type="PRINTS" id="PR01167">
    <property type="entry name" value="INSADHFAMILY"/>
</dbReference>
<dbReference type="PRINTS" id="PR00080">
    <property type="entry name" value="SDRFAMILY"/>
</dbReference>
<dbReference type="SUPFAM" id="SSF51735">
    <property type="entry name" value="NAD(P)-binding Rossmann-fold domains"/>
    <property type="match status" value="1"/>
</dbReference>
<dbReference type="PROSITE" id="PS00061">
    <property type="entry name" value="ADH_SHORT"/>
    <property type="match status" value="1"/>
</dbReference>
<accession>O16091</accession>
<accession>O16092</accession>
<accession>O16094</accession>
<accession>O16096</accession>
<accession>P26621</accession>